<evidence type="ECO:0000255" key="1">
    <source>
        <dbReference type="HAMAP-Rule" id="MF_00331"/>
    </source>
</evidence>
<reference key="1">
    <citation type="journal article" date="2008" name="Genome Res.">
        <title>Comparative genome analysis of Salmonella enteritidis PT4 and Salmonella gallinarum 287/91 provides insights into evolutionary and host adaptation pathways.</title>
        <authorList>
            <person name="Thomson N.R."/>
            <person name="Clayton D.J."/>
            <person name="Windhorst D."/>
            <person name="Vernikos G."/>
            <person name="Davidson S."/>
            <person name="Churcher C."/>
            <person name="Quail M.A."/>
            <person name="Stevens M."/>
            <person name="Jones M.A."/>
            <person name="Watson M."/>
            <person name="Barron A."/>
            <person name="Layton A."/>
            <person name="Pickard D."/>
            <person name="Kingsley R.A."/>
            <person name="Bignell A."/>
            <person name="Clark L."/>
            <person name="Harris B."/>
            <person name="Ormond D."/>
            <person name="Abdellah Z."/>
            <person name="Brooks K."/>
            <person name="Cherevach I."/>
            <person name="Chillingworth T."/>
            <person name="Woodward J."/>
            <person name="Norberczak H."/>
            <person name="Lord A."/>
            <person name="Arrowsmith C."/>
            <person name="Jagels K."/>
            <person name="Moule S."/>
            <person name="Mungall K."/>
            <person name="Saunders M."/>
            <person name="Whitehead S."/>
            <person name="Chabalgoity J.A."/>
            <person name="Maskell D."/>
            <person name="Humphreys T."/>
            <person name="Roberts M."/>
            <person name="Barrow P.A."/>
            <person name="Dougan G."/>
            <person name="Parkhill J."/>
        </authorList>
    </citation>
    <scope>NUCLEOTIDE SEQUENCE [LARGE SCALE GENOMIC DNA]</scope>
    <source>
        <strain>287/91 / NCTC 13346</strain>
    </source>
</reference>
<keyword id="KW-0001">2Fe-2S</keyword>
<keyword id="KW-0963">Cytoplasm</keyword>
<keyword id="KW-0408">Iron</keyword>
<keyword id="KW-0411">Iron-sulfur</keyword>
<keyword id="KW-0479">Metal-binding</keyword>
<keyword id="KW-0663">Pyridoxal phosphate</keyword>
<keyword id="KW-0808">Transferase</keyword>
<accession>B5RD12</accession>
<organism>
    <name type="scientific">Salmonella gallinarum (strain 287/91 / NCTC 13346)</name>
    <dbReference type="NCBI Taxonomy" id="550538"/>
    <lineage>
        <taxon>Bacteria</taxon>
        <taxon>Pseudomonadati</taxon>
        <taxon>Pseudomonadota</taxon>
        <taxon>Gammaproteobacteria</taxon>
        <taxon>Enterobacterales</taxon>
        <taxon>Enterobacteriaceae</taxon>
        <taxon>Salmonella</taxon>
    </lineage>
</organism>
<protein>
    <recommendedName>
        <fullName evidence="1">Cysteine desulfurase IscS</fullName>
        <ecNumber evidence="1">2.8.1.7</ecNumber>
    </recommendedName>
</protein>
<proteinExistence type="inferred from homology"/>
<name>ISCS_SALG2</name>
<dbReference type="EC" id="2.8.1.7" evidence="1"/>
<dbReference type="EMBL" id="AM933173">
    <property type="protein sequence ID" value="CAR38398.1"/>
    <property type="molecule type" value="Genomic_DNA"/>
</dbReference>
<dbReference type="RefSeq" id="WP_000775263.1">
    <property type="nucleotide sequence ID" value="NC_011274.1"/>
</dbReference>
<dbReference type="SMR" id="B5RD12"/>
<dbReference type="KEGG" id="seg:SG2578"/>
<dbReference type="HOGENOM" id="CLU_003433_0_2_6"/>
<dbReference type="UniPathway" id="UPA00266"/>
<dbReference type="Proteomes" id="UP000008321">
    <property type="component" value="Chromosome"/>
</dbReference>
<dbReference type="GO" id="GO:1990221">
    <property type="term" value="C:L-cysteine desulfurase complex"/>
    <property type="evidence" value="ECO:0007669"/>
    <property type="project" value="UniProtKB-ARBA"/>
</dbReference>
<dbReference type="GO" id="GO:0051537">
    <property type="term" value="F:2 iron, 2 sulfur cluster binding"/>
    <property type="evidence" value="ECO:0007669"/>
    <property type="project" value="UniProtKB-UniRule"/>
</dbReference>
<dbReference type="GO" id="GO:0031071">
    <property type="term" value="F:cysteine desulfurase activity"/>
    <property type="evidence" value="ECO:0007669"/>
    <property type="project" value="UniProtKB-UniRule"/>
</dbReference>
<dbReference type="GO" id="GO:0046872">
    <property type="term" value="F:metal ion binding"/>
    <property type="evidence" value="ECO:0007669"/>
    <property type="project" value="UniProtKB-KW"/>
</dbReference>
<dbReference type="GO" id="GO:0030170">
    <property type="term" value="F:pyridoxal phosphate binding"/>
    <property type="evidence" value="ECO:0007669"/>
    <property type="project" value="UniProtKB-UniRule"/>
</dbReference>
<dbReference type="GO" id="GO:0044571">
    <property type="term" value="P:[2Fe-2S] cluster assembly"/>
    <property type="evidence" value="ECO:0007669"/>
    <property type="project" value="UniProtKB-UniRule"/>
</dbReference>
<dbReference type="FunFam" id="3.40.640.10:FF:000003">
    <property type="entry name" value="Cysteine desulfurase IscS"/>
    <property type="match status" value="1"/>
</dbReference>
<dbReference type="FunFam" id="3.90.1150.10:FF:000002">
    <property type="entry name" value="Cysteine desulfurase IscS"/>
    <property type="match status" value="1"/>
</dbReference>
<dbReference type="Gene3D" id="3.90.1150.10">
    <property type="entry name" value="Aspartate Aminotransferase, domain 1"/>
    <property type="match status" value="1"/>
</dbReference>
<dbReference type="Gene3D" id="3.40.640.10">
    <property type="entry name" value="Type I PLP-dependent aspartate aminotransferase-like (Major domain)"/>
    <property type="match status" value="1"/>
</dbReference>
<dbReference type="HAMAP" id="MF_00331">
    <property type="entry name" value="Cys_desulf_IscS"/>
    <property type="match status" value="1"/>
</dbReference>
<dbReference type="InterPro" id="IPR000192">
    <property type="entry name" value="Aminotrans_V_dom"/>
</dbReference>
<dbReference type="InterPro" id="IPR020578">
    <property type="entry name" value="Aminotrans_V_PyrdxlP_BS"/>
</dbReference>
<dbReference type="InterPro" id="IPR010240">
    <property type="entry name" value="Cys_deSase_IscS"/>
</dbReference>
<dbReference type="InterPro" id="IPR016454">
    <property type="entry name" value="Cysteine_dSase"/>
</dbReference>
<dbReference type="InterPro" id="IPR015424">
    <property type="entry name" value="PyrdxlP-dep_Trfase"/>
</dbReference>
<dbReference type="InterPro" id="IPR015421">
    <property type="entry name" value="PyrdxlP-dep_Trfase_major"/>
</dbReference>
<dbReference type="InterPro" id="IPR015422">
    <property type="entry name" value="PyrdxlP-dep_Trfase_small"/>
</dbReference>
<dbReference type="NCBIfam" id="TIGR02006">
    <property type="entry name" value="IscS"/>
    <property type="match status" value="1"/>
</dbReference>
<dbReference type="NCBIfam" id="NF002806">
    <property type="entry name" value="PRK02948.1"/>
    <property type="match status" value="1"/>
</dbReference>
<dbReference type="NCBIfam" id="NF010611">
    <property type="entry name" value="PRK14012.1"/>
    <property type="match status" value="1"/>
</dbReference>
<dbReference type="PANTHER" id="PTHR11601:SF34">
    <property type="entry name" value="CYSTEINE DESULFURASE"/>
    <property type="match status" value="1"/>
</dbReference>
<dbReference type="PANTHER" id="PTHR11601">
    <property type="entry name" value="CYSTEINE DESULFURYLASE FAMILY MEMBER"/>
    <property type="match status" value="1"/>
</dbReference>
<dbReference type="Pfam" id="PF00266">
    <property type="entry name" value="Aminotran_5"/>
    <property type="match status" value="1"/>
</dbReference>
<dbReference type="PIRSF" id="PIRSF005572">
    <property type="entry name" value="NifS"/>
    <property type="match status" value="1"/>
</dbReference>
<dbReference type="SUPFAM" id="SSF53383">
    <property type="entry name" value="PLP-dependent transferases"/>
    <property type="match status" value="1"/>
</dbReference>
<dbReference type="PROSITE" id="PS00595">
    <property type="entry name" value="AA_TRANSFER_CLASS_5"/>
    <property type="match status" value="1"/>
</dbReference>
<gene>
    <name evidence="1" type="primary">iscS</name>
    <name type="ordered locus">SG2578</name>
</gene>
<comment type="function">
    <text evidence="1">Master enzyme that delivers sulfur to a number of partners involved in Fe-S cluster assembly, tRNA modification or cofactor biosynthesis. Catalyzes the removal of elemental sulfur and selenium atoms from cysteine and selenocysteine to produce alanine. Functions as a sulfur delivery protein for Fe-S cluster synthesis onto IscU, an Fe-S scaffold assembly protein, as well as other S acceptor proteins. Also functions as a selenium delivery protein in the pathway for the biosynthesis of selenophosphate.</text>
</comment>
<comment type="catalytic activity">
    <reaction evidence="1">
        <text>(sulfur carrier)-H + L-cysteine = (sulfur carrier)-SH + L-alanine</text>
        <dbReference type="Rhea" id="RHEA:43892"/>
        <dbReference type="Rhea" id="RHEA-COMP:14737"/>
        <dbReference type="Rhea" id="RHEA-COMP:14739"/>
        <dbReference type="ChEBI" id="CHEBI:29917"/>
        <dbReference type="ChEBI" id="CHEBI:35235"/>
        <dbReference type="ChEBI" id="CHEBI:57972"/>
        <dbReference type="ChEBI" id="CHEBI:64428"/>
        <dbReference type="EC" id="2.8.1.7"/>
    </reaction>
</comment>
<comment type="cofactor">
    <cofactor evidence="1">
        <name>pyridoxal 5'-phosphate</name>
        <dbReference type="ChEBI" id="CHEBI:597326"/>
    </cofactor>
</comment>
<comment type="pathway">
    <text evidence="1">Cofactor biosynthesis; iron-sulfur cluster biosynthesis.</text>
</comment>
<comment type="subunit">
    <text evidence="1">Homodimer. Forms a heterotetramer with IscU, interacts with other sulfur acceptors.</text>
</comment>
<comment type="subcellular location">
    <subcellularLocation>
        <location evidence="1">Cytoplasm</location>
    </subcellularLocation>
</comment>
<comment type="similarity">
    <text evidence="1">Belongs to the class-V pyridoxal-phosphate-dependent aminotransferase family. NifS/IscS subfamily.</text>
</comment>
<feature type="chain" id="PRO_1000119643" description="Cysteine desulfurase IscS">
    <location>
        <begin position="1"/>
        <end position="404"/>
    </location>
</feature>
<feature type="active site" description="Cysteine persulfide intermediate" evidence="1">
    <location>
        <position position="328"/>
    </location>
</feature>
<feature type="binding site" evidence="1">
    <location>
        <begin position="75"/>
        <end position="76"/>
    </location>
    <ligand>
        <name>pyridoxal 5'-phosphate</name>
        <dbReference type="ChEBI" id="CHEBI:597326"/>
    </ligand>
</feature>
<feature type="binding site" evidence="1">
    <location>
        <position position="155"/>
    </location>
    <ligand>
        <name>pyridoxal 5'-phosphate</name>
        <dbReference type="ChEBI" id="CHEBI:597326"/>
    </ligand>
</feature>
<feature type="binding site" evidence="1">
    <location>
        <position position="183"/>
    </location>
    <ligand>
        <name>pyridoxal 5'-phosphate</name>
        <dbReference type="ChEBI" id="CHEBI:597326"/>
    </ligand>
</feature>
<feature type="binding site" evidence="1">
    <location>
        <begin position="203"/>
        <end position="205"/>
    </location>
    <ligand>
        <name>pyridoxal 5'-phosphate</name>
        <dbReference type="ChEBI" id="CHEBI:597326"/>
    </ligand>
</feature>
<feature type="binding site" evidence="1">
    <location>
        <position position="243"/>
    </location>
    <ligand>
        <name>pyridoxal 5'-phosphate</name>
        <dbReference type="ChEBI" id="CHEBI:597326"/>
    </ligand>
</feature>
<feature type="binding site" description="via persulfide group" evidence="1">
    <location>
        <position position="328"/>
    </location>
    <ligand>
        <name>[2Fe-2S] cluster</name>
        <dbReference type="ChEBI" id="CHEBI:190135"/>
        <note>ligand shared with IscU</note>
    </ligand>
</feature>
<feature type="modified residue" description="N6-(pyridoxal phosphate)lysine" evidence="1">
    <location>
        <position position="206"/>
    </location>
</feature>
<sequence>MKLPIYLDYSATTPVDPRVAEKMMQFLTLDGTFGNPASRSHRFGWQAEEAVDIARNQIAELVGADPREIVFTSGATESDNLAIKGAANFYQKKGKHIITSKTEHKAVLDTCRQLEREGFEVTYLAPQRNGIIDLNELEAAMRDDTILVSIMHVNNEIGVVQDIATIGEMCRARGIIYHVDATQSVGKLPIDLSQLKVDLMSFSGHKIYGPKGIGALYVRRKPRIRIEAQMHGGGHERGMRSGTLPVHQIVGMGEAYRIAKEEMETEMARLRGLRNRLWNGIKDIEEVYLNGDLEQGAPNILNVSFNYVEGESLIMALKDLAVSSGSACTSASLEPSYVLRALGMNDELAHSSIRFSLGRFTTEEEIDYTIDLVRKSIGRLRDLSPLWEMYKQGVDLNSIEWAHH</sequence>